<evidence type="ECO:0000255" key="1">
    <source>
        <dbReference type="HAMAP-Rule" id="MF_00203"/>
    </source>
</evidence>
<protein>
    <recommendedName>
        <fullName evidence="1">UvrABC system protein C</fullName>
        <shortName evidence="1">Protein UvrC</shortName>
    </recommendedName>
    <alternativeName>
        <fullName evidence="1">Excinuclease ABC subunit C</fullName>
    </alternativeName>
</protein>
<reference key="1">
    <citation type="journal article" date="2004" name="J. Infect. Dis.">
        <title>Progress toward characterization of the group A Streptococcus metagenome: complete genome sequence of a macrolide-resistant serotype M6 strain.</title>
        <authorList>
            <person name="Banks D.J."/>
            <person name="Porcella S.F."/>
            <person name="Barbian K.D."/>
            <person name="Beres S.B."/>
            <person name="Philips L.E."/>
            <person name="Voyich J.M."/>
            <person name="DeLeo F.R."/>
            <person name="Martin J.M."/>
            <person name="Somerville G.A."/>
            <person name="Musser J.M."/>
        </authorList>
    </citation>
    <scope>NUCLEOTIDE SEQUENCE [LARGE SCALE GENOMIC DNA]</scope>
    <source>
        <strain>ATCC BAA-946 / MGAS10394</strain>
    </source>
</reference>
<dbReference type="EMBL" id="CP000003">
    <property type="protein sequence ID" value="AAT86943.1"/>
    <property type="molecule type" value="Genomic_DNA"/>
</dbReference>
<dbReference type="RefSeq" id="WP_011184477.1">
    <property type="nucleotide sequence ID" value="NC_006086.1"/>
</dbReference>
<dbReference type="SMR" id="Q5XCC0"/>
<dbReference type="KEGG" id="spa:M6_Spy0808"/>
<dbReference type="HOGENOM" id="CLU_014841_3_2_9"/>
<dbReference type="Proteomes" id="UP000001167">
    <property type="component" value="Chromosome"/>
</dbReference>
<dbReference type="GO" id="GO:0005737">
    <property type="term" value="C:cytoplasm"/>
    <property type="evidence" value="ECO:0007669"/>
    <property type="project" value="UniProtKB-SubCell"/>
</dbReference>
<dbReference type="GO" id="GO:0009380">
    <property type="term" value="C:excinuclease repair complex"/>
    <property type="evidence" value="ECO:0007669"/>
    <property type="project" value="InterPro"/>
</dbReference>
<dbReference type="GO" id="GO:0003677">
    <property type="term" value="F:DNA binding"/>
    <property type="evidence" value="ECO:0007669"/>
    <property type="project" value="UniProtKB-UniRule"/>
</dbReference>
<dbReference type="GO" id="GO:0009381">
    <property type="term" value="F:excinuclease ABC activity"/>
    <property type="evidence" value="ECO:0007669"/>
    <property type="project" value="UniProtKB-UniRule"/>
</dbReference>
<dbReference type="GO" id="GO:0006289">
    <property type="term" value="P:nucleotide-excision repair"/>
    <property type="evidence" value="ECO:0007669"/>
    <property type="project" value="UniProtKB-UniRule"/>
</dbReference>
<dbReference type="GO" id="GO:0009432">
    <property type="term" value="P:SOS response"/>
    <property type="evidence" value="ECO:0007669"/>
    <property type="project" value="UniProtKB-UniRule"/>
</dbReference>
<dbReference type="CDD" id="cd10434">
    <property type="entry name" value="GIY-YIG_UvrC_Cho"/>
    <property type="match status" value="1"/>
</dbReference>
<dbReference type="FunFam" id="3.30.420.340:FF:000002">
    <property type="entry name" value="UvrABC system protein C"/>
    <property type="match status" value="1"/>
</dbReference>
<dbReference type="FunFam" id="3.40.1440.10:FF:000001">
    <property type="entry name" value="UvrABC system protein C"/>
    <property type="match status" value="1"/>
</dbReference>
<dbReference type="Gene3D" id="1.10.150.20">
    <property type="entry name" value="5' to 3' exonuclease, C-terminal subdomain"/>
    <property type="match status" value="1"/>
</dbReference>
<dbReference type="Gene3D" id="3.40.1440.10">
    <property type="entry name" value="GIY-YIG endonuclease"/>
    <property type="match status" value="1"/>
</dbReference>
<dbReference type="Gene3D" id="4.10.860.10">
    <property type="entry name" value="UVR domain"/>
    <property type="match status" value="1"/>
</dbReference>
<dbReference type="Gene3D" id="3.30.420.340">
    <property type="entry name" value="UvrC, RNAse H endonuclease domain"/>
    <property type="match status" value="1"/>
</dbReference>
<dbReference type="HAMAP" id="MF_00203">
    <property type="entry name" value="UvrC"/>
    <property type="match status" value="1"/>
</dbReference>
<dbReference type="InterPro" id="IPR000305">
    <property type="entry name" value="GIY-YIG_endonuc"/>
</dbReference>
<dbReference type="InterPro" id="IPR035901">
    <property type="entry name" value="GIY-YIG_endonuc_sf"/>
</dbReference>
<dbReference type="InterPro" id="IPR047296">
    <property type="entry name" value="GIY-YIG_UvrC_Cho"/>
</dbReference>
<dbReference type="InterPro" id="IPR010994">
    <property type="entry name" value="RuvA_2-like"/>
</dbReference>
<dbReference type="InterPro" id="IPR001943">
    <property type="entry name" value="UVR_dom"/>
</dbReference>
<dbReference type="InterPro" id="IPR036876">
    <property type="entry name" value="UVR_dom_sf"/>
</dbReference>
<dbReference type="InterPro" id="IPR050066">
    <property type="entry name" value="UvrABC_protein_C"/>
</dbReference>
<dbReference type="InterPro" id="IPR004791">
    <property type="entry name" value="UvrC"/>
</dbReference>
<dbReference type="InterPro" id="IPR001162">
    <property type="entry name" value="UvrC_RNase_H_dom"/>
</dbReference>
<dbReference type="InterPro" id="IPR038476">
    <property type="entry name" value="UvrC_RNase_H_dom_sf"/>
</dbReference>
<dbReference type="NCBIfam" id="TIGR00194">
    <property type="entry name" value="uvrC"/>
    <property type="match status" value="1"/>
</dbReference>
<dbReference type="PANTHER" id="PTHR30562:SF1">
    <property type="entry name" value="UVRABC SYSTEM PROTEIN C"/>
    <property type="match status" value="1"/>
</dbReference>
<dbReference type="PANTHER" id="PTHR30562">
    <property type="entry name" value="UVRC/OXIDOREDUCTASE"/>
    <property type="match status" value="1"/>
</dbReference>
<dbReference type="Pfam" id="PF01541">
    <property type="entry name" value="GIY-YIG"/>
    <property type="match status" value="1"/>
</dbReference>
<dbReference type="Pfam" id="PF14520">
    <property type="entry name" value="HHH_5"/>
    <property type="match status" value="1"/>
</dbReference>
<dbReference type="Pfam" id="PF02151">
    <property type="entry name" value="UVR"/>
    <property type="match status" value="1"/>
</dbReference>
<dbReference type="Pfam" id="PF22920">
    <property type="entry name" value="UvrC_RNaseH"/>
    <property type="match status" value="1"/>
</dbReference>
<dbReference type="Pfam" id="PF08459">
    <property type="entry name" value="UvrC_RNaseH_dom"/>
    <property type="match status" value="1"/>
</dbReference>
<dbReference type="SMART" id="SM00465">
    <property type="entry name" value="GIYc"/>
    <property type="match status" value="1"/>
</dbReference>
<dbReference type="SUPFAM" id="SSF46600">
    <property type="entry name" value="C-terminal UvrC-binding domain of UvrB"/>
    <property type="match status" value="1"/>
</dbReference>
<dbReference type="SUPFAM" id="SSF82771">
    <property type="entry name" value="GIY-YIG endonuclease"/>
    <property type="match status" value="1"/>
</dbReference>
<dbReference type="SUPFAM" id="SSF47781">
    <property type="entry name" value="RuvA domain 2-like"/>
    <property type="match status" value="1"/>
</dbReference>
<dbReference type="PROSITE" id="PS50164">
    <property type="entry name" value="GIY_YIG"/>
    <property type="match status" value="1"/>
</dbReference>
<dbReference type="PROSITE" id="PS50151">
    <property type="entry name" value="UVR"/>
    <property type="match status" value="1"/>
</dbReference>
<dbReference type="PROSITE" id="PS50165">
    <property type="entry name" value="UVRC"/>
    <property type="match status" value="1"/>
</dbReference>
<accession>Q5XCC0</accession>
<gene>
    <name evidence="1" type="primary">uvrC</name>
    <name type="ordered locus">M6_Spy0808</name>
</gene>
<feature type="chain" id="PRO_0000138350" description="UvrABC system protein C">
    <location>
        <begin position="1"/>
        <end position="598"/>
    </location>
</feature>
<feature type="domain" description="GIY-YIG" evidence="1">
    <location>
        <begin position="14"/>
        <end position="91"/>
    </location>
</feature>
<feature type="domain" description="UVR" evidence="1">
    <location>
        <begin position="196"/>
        <end position="231"/>
    </location>
</feature>
<organism>
    <name type="scientific">Streptococcus pyogenes serotype M6 (strain ATCC BAA-946 / MGAS10394)</name>
    <dbReference type="NCBI Taxonomy" id="286636"/>
    <lineage>
        <taxon>Bacteria</taxon>
        <taxon>Bacillati</taxon>
        <taxon>Bacillota</taxon>
        <taxon>Bacilli</taxon>
        <taxon>Lactobacillales</taxon>
        <taxon>Streptococcaceae</taxon>
        <taxon>Streptococcus</taxon>
    </lineage>
</organism>
<comment type="function">
    <text evidence="1">The UvrABC repair system catalyzes the recognition and processing of DNA lesions. UvrC both incises the 5' and 3' sides of the lesion. The N-terminal half is responsible for the 3' incision and the C-terminal half is responsible for the 5' incision.</text>
</comment>
<comment type="subunit">
    <text evidence="1">Interacts with UvrB in an incision complex.</text>
</comment>
<comment type="subcellular location">
    <subcellularLocation>
        <location evidence="1">Cytoplasm</location>
    </subcellularLocation>
</comment>
<comment type="similarity">
    <text evidence="1">Belongs to the UvrC family.</text>
</comment>
<proteinExistence type="inferred from homology"/>
<name>UVRC_STRP6</name>
<sequence length="598" mass="68922">MNELIKHKLELLPDSPGCYLHKDKEGTIIYVGKAKNLKKRVRSYFRGSHDTKTELLVSEIVDFEYIVTESDTEALLLEINLIQKNMPKYNIKLKDDKSYPFLKITNESFPRLVITRYIKKNDGLYFGPYPDSYTANEVKKLLDRIFPFKKCKNPINKVCFYYHLGQCCAHTICHTDKAYWDRLIDDVKHFLNGKDDKIIEDLRSKMLAASEEMAFERAAEYRDLISGIATMRTKQRVMSKDLQDRDIFGYYVDKGWMCVQVFFVRQGKLIQRDVNLFPYYNDAEEDFLTYMGQFYQDKQHFIPKEVFIPEAIDEELVAAIVPTKIIKPKRGEKKQLVALATKNARVSLQQKFDLLEKDIKKTSGAIENLGQLLRIDKPVRIEAFDNSNIQGTSPVAAMVVFVDGKPSKKDYRKFKIKTVVGPDDYASMREVLFRRYSRVKKEGLQAPNLIIVDGGVGQVNVAKDVIEKQLGLTIPVAGLQKNDKHQTHDLLFGNPLEVVSLPRRSEEFFLLHRIQDEVHRFAVTFHRQVRRKNSFSSTLDHISGLGPKRKQLLLRHFKTITAIASATSEEIQALGIPKTVVEAIQQQITDNKNDRSSP</sequence>
<keyword id="KW-0963">Cytoplasm</keyword>
<keyword id="KW-0227">DNA damage</keyword>
<keyword id="KW-0228">DNA excision</keyword>
<keyword id="KW-0234">DNA repair</keyword>
<keyword id="KW-0267">Excision nuclease</keyword>
<keyword id="KW-0742">SOS response</keyword>